<gene>
    <name evidence="1" type="primary">rplF</name>
    <name type="ordered locus">LL2083</name>
    <name type="ORF">L0404</name>
</gene>
<evidence type="ECO:0000255" key="1">
    <source>
        <dbReference type="HAMAP-Rule" id="MF_01365"/>
    </source>
</evidence>
<evidence type="ECO:0000305" key="2"/>
<dbReference type="EMBL" id="AE005176">
    <property type="protein sequence ID" value="AAK06181.1"/>
    <property type="molecule type" value="Genomic_DNA"/>
</dbReference>
<dbReference type="PIR" id="C86885">
    <property type="entry name" value="C86885"/>
</dbReference>
<dbReference type="RefSeq" id="NP_268240.1">
    <property type="nucleotide sequence ID" value="NC_002662.1"/>
</dbReference>
<dbReference type="RefSeq" id="WP_003129925.1">
    <property type="nucleotide sequence ID" value="NC_002662.1"/>
</dbReference>
<dbReference type="SMR" id="Q9CDX8"/>
<dbReference type="PaxDb" id="272623-L0404"/>
<dbReference type="EnsemblBacteria" id="AAK06181">
    <property type="protein sequence ID" value="AAK06181"/>
    <property type="gene ID" value="L0404"/>
</dbReference>
<dbReference type="GeneID" id="89634431"/>
<dbReference type="KEGG" id="lla:L0404"/>
<dbReference type="PATRIC" id="fig|272623.7.peg.2242"/>
<dbReference type="eggNOG" id="COG0097">
    <property type="taxonomic scope" value="Bacteria"/>
</dbReference>
<dbReference type="HOGENOM" id="CLU_065464_1_2_9"/>
<dbReference type="OrthoDB" id="9805007at2"/>
<dbReference type="Proteomes" id="UP000002196">
    <property type="component" value="Chromosome"/>
</dbReference>
<dbReference type="GO" id="GO:0022625">
    <property type="term" value="C:cytosolic large ribosomal subunit"/>
    <property type="evidence" value="ECO:0007669"/>
    <property type="project" value="TreeGrafter"/>
</dbReference>
<dbReference type="GO" id="GO:0019843">
    <property type="term" value="F:rRNA binding"/>
    <property type="evidence" value="ECO:0007669"/>
    <property type="project" value="UniProtKB-UniRule"/>
</dbReference>
<dbReference type="GO" id="GO:0003735">
    <property type="term" value="F:structural constituent of ribosome"/>
    <property type="evidence" value="ECO:0007669"/>
    <property type="project" value="InterPro"/>
</dbReference>
<dbReference type="GO" id="GO:0002181">
    <property type="term" value="P:cytoplasmic translation"/>
    <property type="evidence" value="ECO:0007669"/>
    <property type="project" value="TreeGrafter"/>
</dbReference>
<dbReference type="FunFam" id="3.90.930.12:FF:000001">
    <property type="entry name" value="50S ribosomal protein L6"/>
    <property type="match status" value="1"/>
</dbReference>
<dbReference type="FunFam" id="3.90.930.12:FF:000002">
    <property type="entry name" value="50S ribosomal protein L6"/>
    <property type="match status" value="1"/>
</dbReference>
<dbReference type="Gene3D" id="3.90.930.12">
    <property type="entry name" value="Ribosomal protein L6, alpha-beta domain"/>
    <property type="match status" value="2"/>
</dbReference>
<dbReference type="HAMAP" id="MF_01365_B">
    <property type="entry name" value="Ribosomal_uL6_B"/>
    <property type="match status" value="1"/>
</dbReference>
<dbReference type="InterPro" id="IPR000702">
    <property type="entry name" value="Ribosomal_uL6-like"/>
</dbReference>
<dbReference type="InterPro" id="IPR036789">
    <property type="entry name" value="Ribosomal_uL6-like_a/b-dom_sf"/>
</dbReference>
<dbReference type="InterPro" id="IPR020040">
    <property type="entry name" value="Ribosomal_uL6_a/b-dom"/>
</dbReference>
<dbReference type="InterPro" id="IPR019906">
    <property type="entry name" value="Ribosomal_uL6_bac-type"/>
</dbReference>
<dbReference type="InterPro" id="IPR002358">
    <property type="entry name" value="Ribosomal_uL6_CS"/>
</dbReference>
<dbReference type="NCBIfam" id="TIGR03654">
    <property type="entry name" value="L6_bact"/>
    <property type="match status" value="1"/>
</dbReference>
<dbReference type="PANTHER" id="PTHR11655">
    <property type="entry name" value="60S/50S RIBOSOMAL PROTEIN L6/L9"/>
    <property type="match status" value="1"/>
</dbReference>
<dbReference type="PANTHER" id="PTHR11655:SF14">
    <property type="entry name" value="LARGE RIBOSOMAL SUBUNIT PROTEIN UL6M"/>
    <property type="match status" value="1"/>
</dbReference>
<dbReference type="Pfam" id="PF00347">
    <property type="entry name" value="Ribosomal_L6"/>
    <property type="match status" value="2"/>
</dbReference>
<dbReference type="PIRSF" id="PIRSF002162">
    <property type="entry name" value="Ribosomal_L6"/>
    <property type="match status" value="1"/>
</dbReference>
<dbReference type="PRINTS" id="PR00059">
    <property type="entry name" value="RIBOSOMALL6"/>
</dbReference>
<dbReference type="SUPFAM" id="SSF56053">
    <property type="entry name" value="Ribosomal protein L6"/>
    <property type="match status" value="2"/>
</dbReference>
<dbReference type="PROSITE" id="PS00525">
    <property type="entry name" value="RIBOSOMAL_L6_1"/>
    <property type="match status" value="1"/>
</dbReference>
<keyword id="KW-1185">Reference proteome</keyword>
<keyword id="KW-0687">Ribonucleoprotein</keyword>
<keyword id="KW-0689">Ribosomal protein</keyword>
<keyword id="KW-0694">RNA-binding</keyword>
<keyword id="KW-0699">rRNA-binding</keyword>
<accession>Q9CDX8</accession>
<name>RL6_LACLA</name>
<sequence length="178" mass="19257">MSRIGNKVIVIPAGVSVEVNGATVTVKGPKGELVRSFNENITLDIAENEITVKRPNDTKEMKMLHGTTRALLANMVEGVSTGFSKALEMIGVGYRAQLQGTKLVLSVGKSHQDEVEAPENIKFVVATPTSIVVEGISKEAVGQTAAYIRSRRSPEPYKGKGIRYVGEYVRRKEGKTGK</sequence>
<feature type="chain" id="PRO_0000260885" description="Large ribosomal subunit protein uL6">
    <location>
        <begin position="1"/>
        <end position="178"/>
    </location>
</feature>
<organism>
    <name type="scientific">Lactococcus lactis subsp. lactis (strain IL1403)</name>
    <name type="common">Streptococcus lactis</name>
    <dbReference type="NCBI Taxonomy" id="272623"/>
    <lineage>
        <taxon>Bacteria</taxon>
        <taxon>Bacillati</taxon>
        <taxon>Bacillota</taxon>
        <taxon>Bacilli</taxon>
        <taxon>Lactobacillales</taxon>
        <taxon>Streptococcaceae</taxon>
        <taxon>Lactococcus</taxon>
    </lineage>
</organism>
<comment type="function">
    <text evidence="1">This protein binds to the 23S rRNA, and is important in its secondary structure. It is located near the subunit interface in the base of the L7/L12 stalk, and near the tRNA binding site of the peptidyltransferase center.</text>
</comment>
<comment type="subunit">
    <text evidence="1">Part of the 50S ribosomal subunit.</text>
</comment>
<comment type="similarity">
    <text evidence="1">Belongs to the universal ribosomal protein uL6 family.</text>
</comment>
<protein>
    <recommendedName>
        <fullName evidence="1">Large ribosomal subunit protein uL6</fullName>
    </recommendedName>
    <alternativeName>
        <fullName evidence="2">50S ribosomal protein L6</fullName>
    </alternativeName>
</protein>
<proteinExistence type="inferred from homology"/>
<reference key="1">
    <citation type="journal article" date="2001" name="Genome Res.">
        <title>The complete genome sequence of the lactic acid bacterium Lactococcus lactis ssp. lactis IL1403.</title>
        <authorList>
            <person name="Bolotin A."/>
            <person name="Wincker P."/>
            <person name="Mauger S."/>
            <person name="Jaillon O."/>
            <person name="Malarme K."/>
            <person name="Weissenbach J."/>
            <person name="Ehrlich S.D."/>
            <person name="Sorokin A."/>
        </authorList>
    </citation>
    <scope>NUCLEOTIDE SEQUENCE [LARGE SCALE GENOMIC DNA]</scope>
    <source>
        <strain>IL1403</strain>
    </source>
</reference>